<dbReference type="EMBL" id="D28313">
    <property type="status" value="NOT_ANNOTATED_CDS"/>
    <property type="molecule type" value="mRNA"/>
</dbReference>
<dbReference type="EMBL" id="AP003019">
    <property type="protein sequence ID" value="BAD72315.1"/>
    <property type="molecule type" value="Genomic_DNA"/>
</dbReference>
<dbReference type="EMBL" id="AP007257">
    <property type="protein sequence ID" value="BAD72572.1"/>
    <property type="molecule type" value="Genomic_DNA"/>
</dbReference>
<dbReference type="EMBL" id="AP008212">
    <property type="protein sequence ID" value="BAH93365.1"/>
    <property type="molecule type" value="Genomic_DNA"/>
</dbReference>
<dbReference type="EMBL" id="AP014962">
    <property type="protein sequence ID" value="BAS96472.1"/>
    <property type="molecule type" value="Genomic_DNA"/>
</dbReference>
<dbReference type="EMBL" id="CM000143">
    <property type="protein sequence ID" value="EAZ36044.1"/>
    <property type="molecule type" value="Genomic_DNA"/>
</dbReference>
<dbReference type="EMBL" id="AK287753">
    <property type="status" value="NOT_ANNOTATED_CDS"/>
    <property type="molecule type" value="mRNA"/>
</dbReference>
<dbReference type="RefSeq" id="XP_015641439.1">
    <property type="nucleotide sequence ID" value="XM_015785953.1"/>
</dbReference>
<dbReference type="SMR" id="Q5SMI4"/>
<dbReference type="FunCoup" id="Q5SMI4">
    <property type="interactions" value="1201"/>
</dbReference>
<dbReference type="STRING" id="39947.Q5SMI4"/>
<dbReference type="PaxDb" id="39947-Q5SMI4"/>
<dbReference type="EnsemblPlants" id="Os06t0181566-01">
    <property type="protein sequence ID" value="Os06t0181566-01"/>
    <property type="gene ID" value="Os06g0181566"/>
</dbReference>
<dbReference type="Gramene" id="Os06t0181566-01">
    <property type="protein sequence ID" value="Os06t0181566-01"/>
    <property type="gene ID" value="Os06g0181566"/>
</dbReference>
<dbReference type="KEGG" id="dosa:Os06g0181566"/>
<dbReference type="eggNOG" id="KOG0002">
    <property type="taxonomic scope" value="Eukaryota"/>
</dbReference>
<dbReference type="HOGENOM" id="CLU_181948_1_2_1"/>
<dbReference type="InParanoid" id="Q5SMI4"/>
<dbReference type="OMA" id="QNWRRMK"/>
<dbReference type="OrthoDB" id="274627at2759"/>
<dbReference type="Proteomes" id="UP000000763">
    <property type="component" value="Chromosome 6"/>
</dbReference>
<dbReference type="Proteomes" id="UP000007752">
    <property type="component" value="Chromosome 6"/>
</dbReference>
<dbReference type="Proteomes" id="UP000059680">
    <property type="component" value="Chromosome 6"/>
</dbReference>
<dbReference type="GO" id="GO:0022625">
    <property type="term" value="C:cytosolic large ribosomal subunit"/>
    <property type="evidence" value="ECO:0000318"/>
    <property type="project" value="GO_Central"/>
</dbReference>
<dbReference type="GO" id="GO:0003735">
    <property type="term" value="F:structural constituent of ribosome"/>
    <property type="evidence" value="ECO:0007669"/>
    <property type="project" value="InterPro"/>
</dbReference>
<dbReference type="GO" id="GO:0006412">
    <property type="term" value="P:translation"/>
    <property type="evidence" value="ECO:0007669"/>
    <property type="project" value="InterPro"/>
</dbReference>
<dbReference type="FunFam" id="1.10.1620.10:FF:000001">
    <property type="entry name" value="60S ribosomal protein-like L39"/>
    <property type="match status" value="1"/>
</dbReference>
<dbReference type="Gene3D" id="1.10.1620.10">
    <property type="entry name" value="Ribosomal protein L39e"/>
    <property type="match status" value="1"/>
</dbReference>
<dbReference type="HAMAP" id="MF_00629">
    <property type="entry name" value="Ribosomal_eL39"/>
    <property type="match status" value="1"/>
</dbReference>
<dbReference type="InterPro" id="IPR000077">
    <property type="entry name" value="Ribosomal_eL39"/>
</dbReference>
<dbReference type="InterPro" id="IPR020083">
    <property type="entry name" value="Ribosomal_eL39_CS"/>
</dbReference>
<dbReference type="InterPro" id="IPR023626">
    <property type="entry name" value="Ribosomal_eL39_dom_sf"/>
</dbReference>
<dbReference type="PANTHER" id="PTHR19970:SF0">
    <property type="entry name" value="LARGE RIBOSOMAL SUBUNIT PROTEIN EL39"/>
    <property type="match status" value="1"/>
</dbReference>
<dbReference type="PANTHER" id="PTHR19970">
    <property type="entry name" value="RIBOSOMAL PROTEIN L39E"/>
    <property type="match status" value="1"/>
</dbReference>
<dbReference type="Pfam" id="PF00832">
    <property type="entry name" value="Ribosomal_L39"/>
    <property type="match status" value="1"/>
</dbReference>
<dbReference type="SUPFAM" id="SSF48662">
    <property type="entry name" value="Ribosomal protein L39e"/>
    <property type="match status" value="1"/>
</dbReference>
<dbReference type="PROSITE" id="PS00051">
    <property type="entry name" value="RIBOSOMAL_L39E"/>
    <property type="match status" value="1"/>
</dbReference>
<feature type="chain" id="PRO_0000398170" description="Large ribosomal subunit protein eL39x">
    <location>
        <begin position="1"/>
        <end position="51"/>
    </location>
</feature>
<accession>Q5SMI4</accession>
<accession>A0A0P0WTQ1</accession>
<protein>
    <recommendedName>
        <fullName evidence="1">Large ribosomal subunit protein eL39x</fullName>
    </recommendedName>
    <alternativeName>
        <fullName>60S ribosomal protein L39-3</fullName>
    </alternativeName>
</protein>
<name>RL393_ORYSJ</name>
<keyword id="KW-1185">Reference proteome</keyword>
<keyword id="KW-0687">Ribonucleoprotein</keyword>
<keyword id="KW-0689">Ribosomal protein</keyword>
<sequence>MPSHKTFQIKKKLAKKMRQNRPIPYWIRMRTDNTIRYNAKRRHWRRTKLGF</sequence>
<reference key="1">
    <citation type="submission" date="1994-01" db="EMBL/GenBank/DDBJ databases">
        <title>Rice cDNA from root.</title>
        <authorList>
            <person name="Minobe Y."/>
            <person name="Sasaki T."/>
        </authorList>
    </citation>
    <scope>NUCLEOTIDE SEQUENCE [MRNA]</scope>
    <source>
        <strain>cv. Nipponbare</strain>
        <tissue>Root</tissue>
    </source>
</reference>
<reference key="2">
    <citation type="journal article" date="2005" name="Nature">
        <title>The map-based sequence of the rice genome.</title>
        <authorList>
            <consortium name="International rice genome sequencing project (IRGSP)"/>
        </authorList>
    </citation>
    <scope>NUCLEOTIDE SEQUENCE [LARGE SCALE GENOMIC DNA]</scope>
    <source>
        <strain>cv. Nipponbare</strain>
    </source>
</reference>
<reference key="3">
    <citation type="journal article" date="2008" name="Nucleic Acids Res.">
        <title>The rice annotation project database (RAP-DB): 2008 update.</title>
        <authorList>
            <consortium name="The rice annotation project (RAP)"/>
        </authorList>
    </citation>
    <scope>GENOME REANNOTATION</scope>
    <source>
        <strain>cv. Nipponbare</strain>
    </source>
</reference>
<reference key="4">
    <citation type="journal article" date="2013" name="Rice">
        <title>Improvement of the Oryza sativa Nipponbare reference genome using next generation sequence and optical map data.</title>
        <authorList>
            <person name="Kawahara Y."/>
            <person name="de la Bastide M."/>
            <person name="Hamilton J.P."/>
            <person name="Kanamori H."/>
            <person name="McCombie W.R."/>
            <person name="Ouyang S."/>
            <person name="Schwartz D.C."/>
            <person name="Tanaka T."/>
            <person name="Wu J."/>
            <person name="Zhou S."/>
            <person name="Childs K.L."/>
            <person name="Davidson R.M."/>
            <person name="Lin H."/>
            <person name="Quesada-Ocampo L."/>
            <person name="Vaillancourt B."/>
            <person name="Sakai H."/>
            <person name="Lee S.S."/>
            <person name="Kim J."/>
            <person name="Numa H."/>
            <person name="Itoh T."/>
            <person name="Buell C.R."/>
            <person name="Matsumoto T."/>
        </authorList>
    </citation>
    <scope>GENOME REANNOTATION</scope>
    <source>
        <strain>cv. Nipponbare</strain>
    </source>
</reference>
<reference key="5">
    <citation type="journal article" date="2005" name="PLoS Biol.">
        <title>The genomes of Oryza sativa: a history of duplications.</title>
        <authorList>
            <person name="Yu J."/>
            <person name="Wang J."/>
            <person name="Lin W."/>
            <person name="Li S."/>
            <person name="Li H."/>
            <person name="Zhou J."/>
            <person name="Ni P."/>
            <person name="Dong W."/>
            <person name="Hu S."/>
            <person name="Zeng C."/>
            <person name="Zhang J."/>
            <person name="Zhang Y."/>
            <person name="Li R."/>
            <person name="Xu Z."/>
            <person name="Li S."/>
            <person name="Li X."/>
            <person name="Zheng H."/>
            <person name="Cong L."/>
            <person name="Lin L."/>
            <person name="Yin J."/>
            <person name="Geng J."/>
            <person name="Li G."/>
            <person name="Shi J."/>
            <person name="Liu J."/>
            <person name="Lv H."/>
            <person name="Li J."/>
            <person name="Wang J."/>
            <person name="Deng Y."/>
            <person name="Ran L."/>
            <person name="Shi X."/>
            <person name="Wang X."/>
            <person name="Wu Q."/>
            <person name="Li C."/>
            <person name="Ren X."/>
            <person name="Wang J."/>
            <person name="Wang X."/>
            <person name="Li D."/>
            <person name="Liu D."/>
            <person name="Zhang X."/>
            <person name="Ji Z."/>
            <person name="Zhao W."/>
            <person name="Sun Y."/>
            <person name="Zhang Z."/>
            <person name="Bao J."/>
            <person name="Han Y."/>
            <person name="Dong L."/>
            <person name="Ji J."/>
            <person name="Chen P."/>
            <person name="Wu S."/>
            <person name="Liu J."/>
            <person name="Xiao Y."/>
            <person name="Bu D."/>
            <person name="Tan J."/>
            <person name="Yang L."/>
            <person name="Ye C."/>
            <person name="Zhang J."/>
            <person name="Xu J."/>
            <person name="Zhou Y."/>
            <person name="Yu Y."/>
            <person name="Zhang B."/>
            <person name="Zhuang S."/>
            <person name="Wei H."/>
            <person name="Liu B."/>
            <person name="Lei M."/>
            <person name="Yu H."/>
            <person name="Li Y."/>
            <person name="Xu H."/>
            <person name="Wei S."/>
            <person name="He X."/>
            <person name="Fang L."/>
            <person name="Zhang Z."/>
            <person name="Zhang Y."/>
            <person name="Huang X."/>
            <person name="Su Z."/>
            <person name="Tong W."/>
            <person name="Li J."/>
            <person name="Tong Z."/>
            <person name="Li S."/>
            <person name="Ye J."/>
            <person name="Wang L."/>
            <person name="Fang L."/>
            <person name="Lei T."/>
            <person name="Chen C.-S."/>
            <person name="Chen H.-C."/>
            <person name="Xu Z."/>
            <person name="Li H."/>
            <person name="Huang H."/>
            <person name="Zhang F."/>
            <person name="Xu H."/>
            <person name="Li N."/>
            <person name="Zhao C."/>
            <person name="Li S."/>
            <person name="Dong L."/>
            <person name="Huang Y."/>
            <person name="Li L."/>
            <person name="Xi Y."/>
            <person name="Qi Q."/>
            <person name="Li W."/>
            <person name="Zhang B."/>
            <person name="Hu W."/>
            <person name="Zhang Y."/>
            <person name="Tian X."/>
            <person name="Jiao Y."/>
            <person name="Liang X."/>
            <person name="Jin J."/>
            <person name="Gao L."/>
            <person name="Zheng W."/>
            <person name="Hao B."/>
            <person name="Liu S.-M."/>
            <person name="Wang W."/>
            <person name="Yuan L."/>
            <person name="Cao M."/>
            <person name="McDermott J."/>
            <person name="Samudrala R."/>
            <person name="Wang J."/>
            <person name="Wong G.K.-S."/>
            <person name="Yang H."/>
        </authorList>
    </citation>
    <scope>NUCLEOTIDE SEQUENCE [LARGE SCALE GENOMIC DNA]</scope>
    <source>
        <strain>cv. Nipponbare</strain>
    </source>
</reference>
<reference key="6">
    <citation type="submission" date="2007-09" db="EMBL/GenBank/DDBJ databases">
        <title>Oryza sativa full length cDNA.</title>
        <authorList>
            <consortium name="The rice full-length cDNA consortium"/>
        </authorList>
    </citation>
    <scope>NUCLEOTIDE SEQUENCE [LARGE SCALE MRNA]</scope>
    <source>
        <strain>cv. Nipponbare</strain>
    </source>
</reference>
<proteinExistence type="inferred from homology"/>
<organism>
    <name type="scientific">Oryza sativa subsp. japonica</name>
    <name type="common">Rice</name>
    <dbReference type="NCBI Taxonomy" id="39947"/>
    <lineage>
        <taxon>Eukaryota</taxon>
        <taxon>Viridiplantae</taxon>
        <taxon>Streptophyta</taxon>
        <taxon>Embryophyta</taxon>
        <taxon>Tracheophyta</taxon>
        <taxon>Spermatophyta</taxon>
        <taxon>Magnoliopsida</taxon>
        <taxon>Liliopsida</taxon>
        <taxon>Poales</taxon>
        <taxon>Poaceae</taxon>
        <taxon>BOP clade</taxon>
        <taxon>Oryzoideae</taxon>
        <taxon>Oryzeae</taxon>
        <taxon>Oryzinae</taxon>
        <taxon>Oryza</taxon>
        <taxon>Oryza sativa</taxon>
    </lineage>
</organism>
<comment type="similarity">
    <text evidence="1">Belongs to the eukaryotic ribosomal protein eL39 family.</text>
</comment>
<comment type="sequence caution" evidence="1">
    <conflict type="frameshift">
        <sequence resource="EMBL" id="D28313"/>
    </conflict>
</comment>
<gene>
    <name type="primary">RPL39C</name>
    <name type="ordered locus">Os06g0181566</name>
    <name type="ordered locus">LOC_Os06g08320</name>
    <name type="ORF">OsJ_20351</name>
    <name type="ORF">OSJNBa0035I03.41</name>
    <name type="ORF">OSJNBb0019L07.23</name>
</gene>
<evidence type="ECO:0000305" key="1"/>